<accession>A8FEL2</accession>
<name>GCH1_BACP2</name>
<dbReference type="EC" id="3.5.4.16" evidence="2"/>
<dbReference type="EMBL" id="CP000813">
    <property type="protein sequence ID" value="ABV62679.1"/>
    <property type="molecule type" value="Genomic_DNA"/>
</dbReference>
<dbReference type="RefSeq" id="WP_003215789.1">
    <property type="nucleotide sequence ID" value="NZ_VEIS01000015.1"/>
</dbReference>
<dbReference type="SMR" id="A8FEL2"/>
<dbReference type="STRING" id="315750.BPUM_2009"/>
<dbReference type="GeneID" id="66363593"/>
<dbReference type="KEGG" id="bpu:BPUM_2009"/>
<dbReference type="eggNOG" id="COG0302">
    <property type="taxonomic scope" value="Bacteria"/>
</dbReference>
<dbReference type="HOGENOM" id="CLU_049768_3_3_9"/>
<dbReference type="OrthoDB" id="9801207at2"/>
<dbReference type="UniPathway" id="UPA00848">
    <property type="reaction ID" value="UER00151"/>
</dbReference>
<dbReference type="Proteomes" id="UP000001355">
    <property type="component" value="Chromosome"/>
</dbReference>
<dbReference type="GO" id="GO:0005737">
    <property type="term" value="C:cytoplasm"/>
    <property type="evidence" value="ECO:0007669"/>
    <property type="project" value="TreeGrafter"/>
</dbReference>
<dbReference type="GO" id="GO:0005525">
    <property type="term" value="F:GTP binding"/>
    <property type="evidence" value="ECO:0007669"/>
    <property type="project" value="UniProtKB-KW"/>
</dbReference>
<dbReference type="GO" id="GO:0003934">
    <property type="term" value="F:GTP cyclohydrolase I activity"/>
    <property type="evidence" value="ECO:0007669"/>
    <property type="project" value="UniProtKB-UniRule"/>
</dbReference>
<dbReference type="GO" id="GO:0008270">
    <property type="term" value="F:zinc ion binding"/>
    <property type="evidence" value="ECO:0007669"/>
    <property type="project" value="UniProtKB-UniRule"/>
</dbReference>
<dbReference type="GO" id="GO:0006730">
    <property type="term" value="P:one-carbon metabolic process"/>
    <property type="evidence" value="ECO:0007669"/>
    <property type="project" value="UniProtKB-UniRule"/>
</dbReference>
<dbReference type="GO" id="GO:0006729">
    <property type="term" value="P:tetrahydrobiopterin biosynthetic process"/>
    <property type="evidence" value="ECO:0007669"/>
    <property type="project" value="TreeGrafter"/>
</dbReference>
<dbReference type="GO" id="GO:0046654">
    <property type="term" value="P:tetrahydrofolate biosynthetic process"/>
    <property type="evidence" value="ECO:0007669"/>
    <property type="project" value="UniProtKB-UniRule"/>
</dbReference>
<dbReference type="CDD" id="cd00642">
    <property type="entry name" value="GTP_cyclohydro1"/>
    <property type="match status" value="1"/>
</dbReference>
<dbReference type="FunFam" id="1.10.286.10:FF:000001">
    <property type="entry name" value="GTP cyclohydrolase 1"/>
    <property type="match status" value="1"/>
</dbReference>
<dbReference type="FunFam" id="3.30.1130.10:FF:000001">
    <property type="entry name" value="GTP cyclohydrolase 1"/>
    <property type="match status" value="1"/>
</dbReference>
<dbReference type="Gene3D" id="1.10.286.10">
    <property type="match status" value="1"/>
</dbReference>
<dbReference type="Gene3D" id="3.30.1130.10">
    <property type="match status" value="1"/>
</dbReference>
<dbReference type="HAMAP" id="MF_00223">
    <property type="entry name" value="FolE"/>
    <property type="match status" value="1"/>
</dbReference>
<dbReference type="InterPro" id="IPR043133">
    <property type="entry name" value="GTP-CH-I_C/QueF"/>
</dbReference>
<dbReference type="InterPro" id="IPR043134">
    <property type="entry name" value="GTP-CH-I_N"/>
</dbReference>
<dbReference type="InterPro" id="IPR001474">
    <property type="entry name" value="GTP_CycHdrlase_I"/>
</dbReference>
<dbReference type="InterPro" id="IPR018234">
    <property type="entry name" value="GTP_CycHdrlase_I_CS"/>
</dbReference>
<dbReference type="InterPro" id="IPR020602">
    <property type="entry name" value="GTP_CycHdrlase_I_dom"/>
</dbReference>
<dbReference type="NCBIfam" id="TIGR00063">
    <property type="entry name" value="folE"/>
    <property type="match status" value="1"/>
</dbReference>
<dbReference type="NCBIfam" id="NF006825">
    <property type="entry name" value="PRK09347.1-2"/>
    <property type="match status" value="1"/>
</dbReference>
<dbReference type="NCBIfam" id="NF006826">
    <property type="entry name" value="PRK09347.1-3"/>
    <property type="match status" value="1"/>
</dbReference>
<dbReference type="PANTHER" id="PTHR11109:SF7">
    <property type="entry name" value="GTP CYCLOHYDROLASE 1"/>
    <property type="match status" value="1"/>
</dbReference>
<dbReference type="PANTHER" id="PTHR11109">
    <property type="entry name" value="GTP CYCLOHYDROLASE I"/>
    <property type="match status" value="1"/>
</dbReference>
<dbReference type="Pfam" id="PF01227">
    <property type="entry name" value="GTP_cyclohydroI"/>
    <property type="match status" value="1"/>
</dbReference>
<dbReference type="SUPFAM" id="SSF55620">
    <property type="entry name" value="Tetrahydrobiopterin biosynthesis enzymes-like"/>
    <property type="match status" value="1"/>
</dbReference>
<dbReference type="PROSITE" id="PS00859">
    <property type="entry name" value="GTP_CYCLOHYDROL_1_1"/>
    <property type="match status" value="1"/>
</dbReference>
<dbReference type="PROSITE" id="PS00860">
    <property type="entry name" value="GTP_CYCLOHYDROL_1_2"/>
    <property type="match status" value="1"/>
</dbReference>
<reference key="1">
    <citation type="journal article" date="2007" name="PLoS ONE">
        <title>Paradoxical DNA repair and peroxide resistance gene conservation in Bacillus pumilus SAFR-032.</title>
        <authorList>
            <person name="Gioia J."/>
            <person name="Yerrapragada S."/>
            <person name="Qin X."/>
            <person name="Jiang H."/>
            <person name="Igboeli O.C."/>
            <person name="Muzny D."/>
            <person name="Dugan-Rocha S."/>
            <person name="Ding Y."/>
            <person name="Hawes A."/>
            <person name="Liu W."/>
            <person name="Perez L."/>
            <person name="Kovar C."/>
            <person name="Dinh H."/>
            <person name="Lee S."/>
            <person name="Nazareth L."/>
            <person name="Blyth P."/>
            <person name="Holder M."/>
            <person name="Buhay C."/>
            <person name="Tirumalai M.R."/>
            <person name="Liu Y."/>
            <person name="Dasgupta I."/>
            <person name="Bokhetache L."/>
            <person name="Fujita M."/>
            <person name="Karouia F."/>
            <person name="Eswara Moorthy P."/>
            <person name="Siefert J."/>
            <person name="Uzman A."/>
            <person name="Buzumbo P."/>
            <person name="Verma A."/>
            <person name="Zwiya H."/>
            <person name="McWilliams B.D."/>
            <person name="Olowu A."/>
            <person name="Clinkenbeard K.D."/>
            <person name="Newcombe D."/>
            <person name="Golebiewski L."/>
            <person name="Petrosino J.F."/>
            <person name="Nicholson W.L."/>
            <person name="Fox G.E."/>
            <person name="Venkateswaran K."/>
            <person name="Highlander S.K."/>
            <person name="Weinstock G.M."/>
        </authorList>
    </citation>
    <scope>NUCLEOTIDE SEQUENCE [LARGE SCALE GENOMIC DNA]</scope>
    <source>
        <strain>SAFR-032</strain>
    </source>
</reference>
<protein>
    <recommendedName>
        <fullName evidence="2">GTP cyclohydrolase 1</fullName>
        <ecNumber evidence="2">3.5.4.16</ecNumber>
    </recommendedName>
    <alternativeName>
        <fullName evidence="2">GTP cyclohydrolase I</fullName>
        <shortName evidence="2">GTP-CH-I</shortName>
    </alternativeName>
</protein>
<comment type="catalytic activity">
    <reaction evidence="2">
        <text>GTP + H2O = 7,8-dihydroneopterin 3'-triphosphate + formate + H(+)</text>
        <dbReference type="Rhea" id="RHEA:17473"/>
        <dbReference type="ChEBI" id="CHEBI:15377"/>
        <dbReference type="ChEBI" id="CHEBI:15378"/>
        <dbReference type="ChEBI" id="CHEBI:15740"/>
        <dbReference type="ChEBI" id="CHEBI:37565"/>
        <dbReference type="ChEBI" id="CHEBI:58462"/>
        <dbReference type="EC" id="3.5.4.16"/>
    </reaction>
</comment>
<comment type="pathway">
    <text evidence="2">Cofactor biosynthesis; 7,8-dihydroneopterin triphosphate biosynthesis; 7,8-dihydroneopterin triphosphate from GTP: step 1/1.</text>
</comment>
<comment type="subunit">
    <text evidence="1">Toroid-shaped homodecamer, composed of two pentamers of five dimers.</text>
</comment>
<comment type="similarity">
    <text evidence="2">Belongs to the GTP cyclohydrolase I family.</text>
</comment>
<gene>
    <name evidence="2" type="primary">folE</name>
    <name type="ordered locus">BPUM_2009</name>
</gene>
<organism>
    <name type="scientific">Bacillus pumilus (strain SAFR-032)</name>
    <dbReference type="NCBI Taxonomy" id="315750"/>
    <lineage>
        <taxon>Bacteria</taxon>
        <taxon>Bacillati</taxon>
        <taxon>Bacillota</taxon>
        <taxon>Bacilli</taxon>
        <taxon>Bacillales</taxon>
        <taxon>Bacillaceae</taxon>
        <taxon>Bacillus</taxon>
    </lineage>
</organism>
<evidence type="ECO:0000250" key="1"/>
<evidence type="ECO:0000255" key="2">
    <source>
        <dbReference type="HAMAP-Rule" id="MF_00223"/>
    </source>
</evidence>
<proteinExistence type="inferred from homology"/>
<sequence>MSEINKELIEHAVRDILKAIGEDPDREGLLDTPKRVAKMYEEVFSGLNEDPKEHFKTIFGEDHEELVLVKDIAFHSMCEHHLVPFYGKAHVAYIPRGGKVTGLSKLARAVEAVAKRPQLQERITSTIADSMVETLNPHGVMIVVEAEHMCMTMRGVKKPGAKTVTSAVRGTFANDAAARAEVLSFIKND</sequence>
<keyword id="KW-0342">GTP-binding</keyword>
<keyword id="KW-0378">Hydrolase</keyword>
<keyword id="KW-0479">Metal-binding</keyword>
<keyword id="KW-0547">Nucleotide-binding</keyword>
<keyword id="KW-0554">One-carbon metabolism</keyword>
<keyword id="KW-0862">Zinc</keyword>
<feature type="chain" id="PRO_1000058669" description="GTP cyclohydrolase 1">
    <location>
        <begin position="1"/>
        <end position="189"/>
    </location>
</feature>
<feature type="binding site" evidence="2">
    <location>
        <position position="78"/>
    </location>
    <ligand>
        <name>Zn(2+)</name>
        <dbReference type="ChEBI" id="CHEBI:29105"/>
    </ligand>
</feature>
<feature type="binding site" evidence="2">
    <location>
        <position position="81"/>
    </location>
    <ligand>
        <name>Zn(2+)</name>
        <dbReference type="ChEBI" id="CHEBI:29105"/>
    </ligand>
</feature>
<feature type="binding site" evidence="2">
    <location>
        <position position="150"/>
    </location>
    <ligand>
        <name>Zn(2+)</name>
        <dbReference type="ChEBI" id="CHEBI:29105"/>
    </ligand>
</feature>